<accession>Q3UMR5</accession>
<accession>B2RTD1</accession>
<accession>Q3TTK3</accession>
<evidence type="ECO:0000250" key="1">
    <source>
        <dbReference type="UniProtKB" id="Q8NE86"/>
    </source>
</evidence>
<evidence type="ECO:0000255" key="2"/>
<evidence type="ECO:0000269" key="3">
    <source>
    </source>
</evidence>
<evidence type="ECO:0000269" key="4">
    <source>
    </source>
</evidence>
<evidence type="ECO:0000269" key="5">
    <source>
    </source>
</evidence>
<evidence type="ECO:0000269" key="6">
    <source>
    </source>
</evidence>
<evidence type="ECO:0000269" key="7">
    <source>
    </source>
</evidence>
<evidence type="ECO:0000269" key="8">
    <source>
    </source>
</evidence>
<evidence type="ECO:0000269" key="9">
    <source>
    </source>
</evidence>
<evidence type="ECO:0000269" key="10">
    <source>
    </source>
</evidence>
<evidence type="ECO:0000269" key="11">
    <source>
    </source>
</evidence>
<evidence type="ECO:0000269" key="12">
    <source>
    </source>
</evidence>
<evidence type="ECO:0000269" key="13">
    <source>
    </source>
</evidence>
<evidence type="ECO:0000269" key="14">
    <source>
    </source>
</evidence>
<evidence type="ECO:0000303" key="15">
    <source>
    </source>
</evidence>
<evidence type="ECO:0000303" key="16">
    <source>
    </source>
</evidence>
<evidence type="ECO:0000305" key="17"/>
<evidence type="ECO:0000305" key="18">
    <source>
    </source>
</evidence>
<evidence type="ECO:0000312" key="19">
    <source>
        <dbReference type="MGI" id="MGI:3026965"/>
    </source>
</evidence>
<evidence type="ECO:0007744" key="20">
    <source>
    </source>
</evidence>
<feature type="transit peptide" description="Mitochondrion" evidence="2">
    <location>
        <begin position="1"/>
        <end position="49"/>
    </location>
</feature>
<feature type="chain" id="PRO_0000282977" description="Calcium uniporter protein, mitochondrial">
    <location>
        <begin position="50"/>
        <end position="350"/>
    </location>
</feature>
<feature type="topological domain" description="Mitochondrial matrix" evidence="1">
    <location>
        <begin position="50"/>
        <end position="232"/>
    </location>
</feature>
<feature type="transmembrane region" description="Helical" evidence="2">
    <location>
        <begin position="233"/>
        <end position="256"/>
    </location>
</feature>
<feature type="topological domain" description="Mitochondrial intermembrane" evidence="1">
    <location>
        <begin position="257"/>
        <end position="264"/>
    </location>
</feature>
<feature type="transmembrane region" description="Helical" evidence="2">
    <location>
        <begin position="265"/>
        <end position="282"/>
    </location>
</feature>
<feature type="topological domain" description="Mitochondrial matrix" evidence="1">
    <location>
        <begin position="283"/>
        <end position="350"/>
    </location>
</feature>
<feature type="region of interest" description="N-terminal MCU domain" evidence="1">
    <location>
        <begin position="74"/>
        <end position="164"/>
    </location>
</feature>
<feature type="region of interest" description="Juxtamembrane helix" evidence="1">
    <location>
        <begin position="284"/>
        <end position="289"/>
    </location>
</feature>
<feature type="coiled-coil region" evidence="2">
    <location>
        <begin position="191"/>
        <end position="220"/>
    </location>
</feature>
<feature type="coiled-coil region" evidence="2">
    <location>
        <begin position="310"/>
        <end position="338"/>
    </location>
</feature>
<feature type="short sequence motif" description="Selectivity filter" evidence="1">
    <location>
        <begin position="259"/>
        <end position="267"/>
    </location>
</feature>
<feature type="binding site" evidence="1">
    <location>
        <position position="263"/>
    </location>
    <ligand>
        <name>Ca(2+)</name>
        <dbReference type="ChEBI" id="CHEBI:29108"/>
    </ligand>
</feature>
<feature type="modified residue" description="Phosphoserine; by CaMK2" evidence="1">
    <location>
        <position position="56"/>
    </location>
</feature>
<feature type="modified residue" description="Phosphoserine; by CaMK2" evidence="1">
    <location>
        <position position="91"/>
    </location>
</feature>
<feature type="modified residue" description="S-glutathionyl cysteine" evidence="1">
    <location>
        <position position="96"/>
    </location>
</feature>
<feature type="modified residue" description="N6-acetyllysine" evidence="20">
    <location>
        <position position="331"/>
    </location>
</feature>
<feature type="splice variant" id="VSP_024264" description="In isoform 2." evidence="15 16">
    <location>
        <begin position="1"/>
        <end position="149"/>
    </location>
</feature>
<feature type="splice variant" id="VSP_024265" description="In isoform 2." evidence="15 16">
    <original>LVINDLTYHVRPPKR</original>
    <variation>MILRPKQLFSAFTKQ</variation>
    <location>
        <begin position="150"/>
        <end position="164"/>
    </location>
</feature>
<feature type="mutagenesis site" description="Strongly reduces calcium channel activity; when associated with V-256." evidence="6">
    <original>R</original>
    <variation>W</variation>
    <location>
        <position position="251"/>
    </location>
</feature>
<feature type="mutagenesis site" description="Strongly reduces calcium channel activity; when associated with W-251." evidence="6">
    <original>E</original>
    <variation>V</variation>
    <location>
        <position position="256"/>
    </location>
</feature>
<gene>
    <name evidence="19" type="primary">Mcu</name>
</gene>
<sequence length="350" mass="39682">MAAAAGRSLLLLLCSRGGGGGAGGCGALTAGCFPGLGVSRHRPHQQHRTAHQRPASWQSVGAAYCSTVVPSDDVTVVYQNGLPVISVRLPSRRERCQFTLKPISDSVGVFLRQLQEEDRGIDRVAIYSPDGVRVAASTGIDLLLLDDFKLVINDLTYHVRPPKRDLLSHEDAATLNDVKTLVQQLYTTLCIEQHQLNKERELVERLEDLKQQLAPLEKVRIEISRKAEKRTTLVLWGGLAYMATQFGILARLTWWEYSWDIMEPVTYFITYGSAMAMYAYFVMTRQEYVYPEARDRQYLLFFHKGAKKSRFDLEKYNQLKDAIAQAEMDLKRLRDPLQVHLPLRQIGEKE</sequence>
<reference key="1">
    <citation type="journal article" date="2005" name="Science">
        <title>The transcriptional landscape of the mammalian genome.</title>
        <authorList>
            <person name="Carninci P."/>
            <person name="Kasukawa T."/>
            <person name="Katayama S."/>
            <person name="Gough J."/>
            <person name="Frith M.C."/>
            <person name="Maeda N."/>
            <person name="Oyama R."/>
            <person name="Ravasi T."/>
            <person name="Lenhard B."/>
            <person name="Wells C."/>
            <person name="Kodzius R."/>
            <person name="Shimokawa K."/>
            <person name="Bajic V.B."/>
            <person name="Brenner S.E."/>
            <person name="Batalov S."/>
            <person name="Forrest A.R."/>
            <person name="Zavolan M."/>
            <person name="Davis M.J."/>
            <person name="Wilming L.G."/>
            <person name="Aidinis V."/>
            <person name="Allen J.E."/>
            <person name="Ambesi-Impiombato A."/>
            <person name="Apweiler R."/>
            <person name="Aturaliya R.N."/>
            <person name="Bailey T.L."/>
            <person name="Bansal M."/>
            <person name="Baxter L."/>
            <person name="Beisel K.W."/>
            <person name="Bersano T."/>
            <person name="Bono H."/>
            <person name="Chalk A.M."/>
            <person name="Chiu K.P."/>
            <person name="Choudhary V."/>
            <person name="Christoffels A."/>
            <person name="Clutterbuck D.R."/>
            <person name="Crowe M.L."/>
            <person name="Dalla E."/>
            <person name="Dalrymple B.P."/>
            <person name="de Bono B."/>
            <person name="Della Gatta G."/>
            <person name="di Bernardo D."/>
            <person name="Down T."/>
            <person name="Engstrom P."/>
            <person name="Fagiolini M."/>
            <person name="Faulkner G."/>
            <person name="Fletcher C.F."/>
            <person name="Fukushima T."/>
            <person name="Furuno M."/>
            <person name="Futaki S."/>
            <person name="Gariboldi M."/>
            <person name="Georgii-Hemming P."/>
            <person name="Gingeras T.R."/>
            <person name="Gojobori T."/>
            <person name="Green R.E."/>
            <person name="Gustincich S."/>
            <person name="Harbers M."/>
            <person name="Hayashi Y."/>
            <person name="Hensch T.K."/>
            <person name="Hirokawa N."/>
            <person name="Hill D."/>
            <person name="Huminiecki L."/>
            <person name="Iacono M."/>
            <person name="Ikeo K."/>
            <person name="Iwama A."/>
            <person name="Ishikawa T."/>
            <person name="Jakt M."/>
            <person name="Kanapin A."/>
            <person name="Katoh M."/>
            <person name="Kawasawa Y."/>
            <person name="Kelso J."/>
            <person name="Kitamura H."/>
            <person name="Kitano H."/>
            <person name="Kollias G."/>
            <person name="Krishnan S.P."/>
            <person name="Kruger A."/>
            <person name="Kummerfeld S.K."/>
            <person name="Kurochkin I.V."/>
            <person name="Lareau L.F."/>
            <person name="Lazarevic D."/>
            <person name="Lipovich L."/>
            <person name="Liu J."/>
            <person name="Liuni S."/>
            <person name="McWilliam S."/>
            <person name="Madan Babu M."/>
            <person name="Madera M."/>
            <person name="Marchionni L."/>
            <person name="Matsuda H."/>
            <person name="Matsuzawa S."/>
            <person name="Miki H."/>
            <person name="Mignone F."/>
            <person name="Miyake S."/>
            <person name="Morris K."/>
            <person name="Mottagui-Tabar S."/>
            <person name="Mulder N."/>
            <person name="Nakano N."/>
            <person name="Nakauchi H."/>
            <person name="Ng P."/>
            <person name="Nilsson R."/>
            <person name="Nishiguchi S."/>
            <person name="Nishikawa S."/>
            <person name="Nori F."/>
            <person name="Ohara O."/>
            <person name="Okazaki Y."/>
            <person name="Orlando V."/>
            <person name="Pang K.C."/>
            <person name="Pavan W.J."/>
            <person name="Pavesi G."/>
            <person name="Pesole G."/>
            <person name="Petrovsky N."/>
            <person name="Piazza S."/>
            <person name="Reed J."/>
            <person name="Reid J.F."/>
            <person name="Ring B.Z."/>
            <person name="Ringwald M."/>
            <person name="Rost B."/>
            <person name="Ruan Y."/>
            <person name="Salzberg S.L."/>
            <person name="Sandelin A."/>
            <person name="Schneider C."/>
            <person name="Schoenbach C."/>
            <person name="Sekiguchi K."/>
            <person name="Semple C.A."/>
            <person name="Seno S."/>
            <person name="Sessa L."/>
            <person name="Sheng Y."/>
            <person name="Shibata Y."/>
            <person name="Shimada H."/>
            <person name="Shimada K."/>
            <person name="Silva D."/>
            <person name="Sinclair B."/>
            <person name="Sperling S."/>
            <person name="Stupka E."/>
            <person name="Sugiura K."/>
            <person name="Sultana R."/>
            <person name="Takenaka Y."/>
            <person name="Taki K."/>
            <person name="Tammoja K."/>
            <person name="Tan S.L."/>
            <person name="Tang S."/>
            <person name="Taylor M.S."/>
            <person name="Tegner J."/>
            <person name="Teichmann S.A."/>
            <person name="Ueda H.R."/>
            <person name="van Nimwegen E."/>
            <person name="Verardo R."/>
            <person name="Wei C.L."/>
            <person name="Yagi K."/>
            <person name="Yamanishi H."/>
            <person name="Zabarovsky E."/>
            <person name="Zhu S."/>
            <person name="Zimmer A."/>
            <person name="Hide W."/>
            <person name="Bult C."/>
            <person name="Grimmond S.M."/>
            <person name="Teasdale R.D."/>
            <person name="Liu E.T."/>
            <person name="Brusic V."/>
            <person name="Quackenbush J."/>
            <person name="Wahlestedt C."/>
            <person name="Mattick J.S."/>
            <person name="Hume D.A."/>
            <person name="Kai C."/>
            <person name="Sasaki D."/>
            <person name="Tomaru Y."/>
            <person name="Fukuda S."/>
            <person name="Kanamori-Katayama M."/>
            <person name="Suzuki M."/>
            <person name="Aoki J."/>
            <person name="Arakawa T."/>
            <person name="Iida J."/>
            <person name="Imamura K."/>
            <person name="Itoh M."/>
            <person name="Kato T."/>
            <person name="Kawaji H."/>
            <person name="Kawagashira N."/>
            <person name="Kawashima T."/>
            <person name="Kojima M."/>
            <person name="Kondo S."/>
            <person name="Konno H."/>
            <person name="Nakano K."/>
            <person name="Ninomiya N."/>
            <person name="Nishio T."/>
            <person name="Okada M."/>
            <person name="Plessy C."/>
            <person name="Shibata K."/>
            <person name="Shiraki T."/>
            <person name="Suzuki S."/>
            <person name="Tagami M."/>
            <person name="Waki K."/>
            <person name="Watahiki A."/>
            <person name="Okamura-Oho Y."/>
            <person name="Suzuki H."/>
            <person name="Kawai J."/>
            <person name="Hayashizaki Y."/>
        </authorList>
    </citation>
    <scope>NUCLEOTIDE SEQUENCE [LARGE SCALE MRNA] (ISOFORM 2)</scope>
    <scope>NUCLEOTIDE SEQUENCE [LARGE SCALE MRNA] OF 1-224 (ISOFORM 1)</scope>
    <source>
        <strain>C57BL/6J</strain>
        <tissue>Lung</tissue>
        <tissue>Testis</tissue>
    </source>
</reference>
<reference key="2">
    <citation type="journal article" date="2009" name="PLoS Biol.">
        <title>Lineage-specific biology revealed by a finished genome assembly of the mouse.</title>
        <authorList>
            <person name="Church D.M."/>
            <person name="Goodstadt L."/>
            <person name="Hillier L.W."/>
            <person name="Zody M.C."/>
            <person name="Goldstein S."/>
            <person name="She X."/>
            <person name="Bult C.J."/>
            <person name="Agarwala R."/>
            <person name="Cherry J.L."/>
            <person name="DiCuccio M."/>
            <person name="Hlavina W."/>
            <person name="Kapustin Y."/>
            <person name="Meric P."/>
            <person name="Maglott D."/>
            <person name="Birtle Z."/>
            <person name="Marques A.C."/>
            <person name="Graves T."/>
            <person name="Zhou S."/>
            <person name="Teague B."/>
            <person name="Potamousis K."/>
            <person name="Churas C."/>
            <person name="Place M."/>
            <person name="Herschleb J."/>
            <person name="Runnheim R."/>
            <person name="Forrest D."/>
            <person name="Amos-Landgraf J."/>
            <person name="Schwartz D.C."/>
            <person name="Cheng Z."/>
            <person name="Lindblad-Toh K."/>
            <person name="Eichler E.E."/>
            <person name="Ponting C.P."/>
        </authorList>
    </citation>
    <scope>NUCLEOTIDE SEQUENCE [LARGE SCALE GENOMIC DNA]</scope>
    <source>
        <strain>C57BL/6J</strain>
    </source>
</reference>
<reference key="3">
    <citation type="journal article" date="2004" name="Genome Res.">
        <title>The status, quality, and expansion of the NIH full-length cDNA project: the Mammalian Gene Collection (MGC).</title>
        <authorList>
            <consortium name="The MGC Project Team"/>
        </authorList>
    </citation>
    <scope>NUCLEOTIDE SEQUENCE [LARGE SCALE MRNA] (ISOFORM 2)</scope>
    <source>
        <tissue>Brain</tissue>
    </source>
</reference>
<reference key="4">
    <citation type="journal article" date="2010" name="Cell">
        <title>A tissue-specific atlas of mouse protein phosphorylation and expression.</title>
        <authorList>
            <person name="Huttlin E.L."/>
            <person name="Jedrychowski M.P."/>
            <person name="Elias J.E."/>
            <person name="Goswami T."/>
            <person name="Rad R."/>
            <person name="Beausoleil S.A."/>
            <person name="Villen J."/>
            <person name="Haas W."/>
            <person name="Sowa M.E."/>
            <person name="Gygi S.P."/>
        </authorList>
    </citation>
    <scope>IDENTIFICATION BY MASS SPECTROMETRY [LARGE SCALE ANALYSIS]</scope>
    <source>
        <tissue>Brain</tissue>
        <tissue>Brown adipose tissue</tissue>
        <tissue>Heart</tissue>
        <tissue>Kidney</tissue>
        <tissue>Liver</tissue>
        <tissue>Lung</tissue>
        <tissue>Pancreas</tissue>
        <tissue>Spleen</tissue>
    </source>
</reference>
<reference key="5">
    <citation type="journal article" date="2011" name="Nature">
        <title>Integrative genomics identifies MCU as an essential component of the mitochondrial calcium uniporter.</title>
        <authorList>
            <person name="Baughman J.M."/>
            <person name="Perocchi F."/>
            <person name="Girgis H.S."/>
            <person name="Plovanich M."/>
            <person name="Belcher-Timme C.A."/>
            <person name="Sancak Y."/>
            <person name="Bao X.R."/>
            <person name="Strittmatter L."/>
            <person name="Goldberger O."/>
            <person name="Bogorad R.L."/>
            <person name="Koteliansky V."/>
            <person name="Mootha V.K."/>
        </authorList>
    </citation>
    <scope>FUNCTION</scope>
</reference>
<reference key="6">
    <citation type="journal article" date="2011" name="Nature">
        <title>A forty-kilodalton protein of the inner membrane is the mitochondrial calcium uniporter.</title>
        <authorList>
            <person name="De Stefani D."/>
            <person name="Raffaello A."/>
            <person name="Teardo E."/>
            <person name="Szabo I."/>
            <person name="Rizzuto R."/>
        </authorList>
    </citation>
    <scope>TISSUE SPECIFICITY</scope>
</reference>
<reference key="7">
    <citation type="journal article" date="2013" name="EMBO J.">
        <title>The mitochondrial calcium uniporter is a multimer that can include a dominant-negative pore-forming subunit.</title>
        <authorList>
            <person name="Raffaello A."/>
            <person name="De Stefani D."/>
            <person name="Sabbadin D."/>
            <person name="Teardo E."/>
            <person name="Merli G."/>
            <person name="Picard A."/>
            <person name="Checchetto V."/>
            <person name="Moro S."/>
            <person name="Szabo I."/>
            <person name="Rizzuto R."/>
        </authorList>
    </citation>
    <scope>FUNCTION</scope>
    <scope>SUBUNIT</scope>
    <scope>SUBCELLULAR LOCATION</scope>
    <scope>MUTAGENESIS OF ARG-251 AND GLU-256</scope>
    <scope>TISSUE SPECIFICITY</scope>
</reference>
<reference key="8">
    <citation type="journal article" date="2013" name="Nat. Cell Biol.">
        <title>The physiological role of mitochondrial calcium revealed by mice lacking the mitochondrial calcium uniporter.</title>
        <authorList>
            <person name="Pan X."/>
            <person name="Liu J."/>
            <person name="Nguyen T."/>
            <person name="Liu C."/>
            <person name="Sun J."/>
            <person name="Teng Y."/>
            <person name="Fergusson M.M."/>
            <person name="Rovira I.I."/>
            <person name="Allen M."/>
            <person name="Springer D.A."/>
            <person name="Aponte A.M."/>
            <person name="Gucek M."/>
            <person name="Balaban R.S."/>
            <person name="Murphy E."/>
            <person name="Finkel T."/>
        </authorList>
    </citation>
    <scope>DISRUPTION PHENOTYPE</scope>
    <scope>FUNCTION</scope>
</reference>
<reference key="9">
    <citation type="journal article" date="2013" name="PLoS ONE">
        <title>MICU2, a paralog of MICU1, resides within the mitochondrial uniporter complex to regulate calcium handling.</title>
        <authorList>
            <person name="Plovanich M."/>
            <person name="Bogorad R.L."/>
            <person name="Sancak Y."/>
            <person name="Kamer K.J."/>
            <person name="Strittmatter L."/>
            <person name="Li A.A."/>
            <person name="Girgis H.S."/>
            <person name="Kuchimanchi S."/>
            <person name="De Groot J."/>
            <person name="Speciner L."/>
            <person name="Taneja N."/>
            <person name="Oshea J."/>
            <person name="Koteliansky V."/>
            <person name="Mootha V.K."/>
        </authorList>
    </citation>
    <scope>IDENTIFICATION IN A COMPLEX WITH MICU1 AND MICU2</scope>
    <scope>TISSUE SPECIFICITY</scope>
</reference>
<reference key="10">
    <citation type="journal article" date="2013" name="Proc. Natl. Acad. Sci. U.S.A.">
        <title>Label-free quantitative proteomics of the lysine acetylome in mitochondria identifies substrates of SIRT3 in metabolic pathways.</title>
        <authorList>
            <person name="Rardin M.J."/>
            <person name="Newman J.C."/>
            <person name="Held J.M."/>
            <person name="Cusack M.P."/>
            <person name="Sorensen D.J."/>
            <person name="Li B."/>
            <person name="Schilling B."/>
            <person name="Mooney S.D."/>
            <person name="Kahn C.R."/>
            <person name="Verdin E."/>
            <person name="Gibson B.W."/>
        </authorList>
    </citation>
    <scope>ACETYLATION [LARGE SCALE ANALYSIS] AT LYS-331</scope>
    <scope>IDENTIFICATION BY MASS SPECTROMETRY [LARGE SCALE ANALYSIS]</scope>
    <source>
        <tissue>Liver</tissue>
    </source>
</reference>
<reference key="11">
    <citation type="journal article" date="2015" name="Cell Rep.">
        <title>The mitochondrial calcium uniporter controls skeletal muscle trophism in vivo.</title>
        <authorList>
            <person name="Mammucari C."/>
            <person name="Gherardi G."/>
            <person name="Zamparo I."/>
            <person name="Raffaello A."/>
            <person name="Boncompagni S."/>
            <person name="Chemello F."/>
            <person name="Cagnin S."/>
            <person name="Braga A."/>
            <person name="Zanin S."/>
            <person name="Pallafacchina G."/>
            <person name="Zentilin L."/>
            <person name="Sandri M."/>
            <person name="De Stefani D."/>
            <person name="Protasi F."/>
            <person name="Lanfranchi G."/>
            <person name="Rizzuto R."/>
        </authorList>
    </citation>
    <scope>FUNCTION</scope>
</reference>
<reference key="12">
    <citation type="journal article" date="2015" name="Cell Rep.">
        <title>The mitochondrial calcium uniporter selectively matches metabolic output to acute contractile stress in the heart.</title>
        <authorList>
            <person name="Kwong J.Q."/>
            <person name="Lu X."/>
            <person name="Correll R.N."/>
            <person name="Schwanekamp J.A."/>
            <person name="Vagnozzi R.J."/>
            <person name="Sargent M.A."/>
            <person name="York A.J."/>
            <person name="Zhang J."/>
            <person name="Bers D.M."/>
            <person name="Molkentin J.D."/>
        </authorList>
    </citation>
    <scope>FUNCTION</scope>
    <scope>DISRUPTION PHENOTYPE</scope>
</reference>
<reference key="13">
    <citation type="journal article" date="2015" name="Cell Rep.">
        <title>The mitochondrial calcium uniporter matches energetic supply with cardiac workload during stress and modulates permeability transition.</title>
        <authorList>
            <person name="Luongo T.S."/>
            <person name="Lambert J.P."/>
            <person name="Yuan A."/>
            <person name="Zhang X."/>
            <person name="Gross P."/>
            <person name="Song J."/>
            <person name="Shanmughapriya S."/>
            <person name="Gao E."/>
            <person name="Jain M."/>
            <person name="Houser S.R."/>
            <person name="Koch W.J."/>
            <person name="Cheung J.Y."/>
            <person name="Madesh M."/>
            <person name="Elrod J.W."/>
        </authorList>
    </citation>
    <scope>FUNCTION</scope>
    <scope>DISRUPTION PHENOTYPE</scope>
</reference>
<reference key="14">
    <citation type="journal article" date="2014" name="Immunology">
        <title>A role for mitochondria in antigen processing and presentation.</title>
        <authorList>
            <person name="Bonifaz L."/>
            <person name="Cervantes-Silva M."/>
            <person name="Ontiveros-Dotor E."/>
            <person name="Lopez-Villegas E."/>
            <person name="Sanchez-Garcia F."/>
        </authorList>
    </citation>
    <scope>FUNCTION</scope>
</reference>
<reference key="15">
    <citation type="journal article" date="2015" name="J. Mol. Cell. Cardiol.">
        <title>Assessment of cardiac function in mice lacking the mitochondrial calcium uniporter.</title>
        <authorList>
            <person name="Holmstroem K.M."/>
            <person name="Pan X."/>
            <person name="Liu J.C."/>
            <person name="Menazza S."/>
            <person name="Liu J."/>
            <person name="Nguyen T.T."/>
            <person name="Pan H."/>
            <person name="Parks R.J."/>
            <person name="Anderson S."/>
            <person name="Noguchi A."/>
            <person name="Springer D."/>
            <person name="Murphy E."/>
            <person name="Finkel T."/>
        </authorList>
    </citation>
    <scope>DISRUPTION PHENOTYPE</scope>
    <scope>TISSUE SPECIFICITY</scope>
    <scope>SUBCELLULAR LOCATION</scope>
</reference>
<reference key="16">
    <citation type="journal article" date="2015" name="Nat. Commun.">
        <title>The mitochondrial uniporter controls fight or flight heart rate increases.</title>
        <authorList>
            <person name="Wu Y."/>
            <person name="Rasmussen T.P."/>
            <person name="Koval O.M."/>
            <person name="Joiner M.L."/>
            <person name="Hall D.D."/>
            <person name="Chen B."/>
            <person name="Luczak E.D."/>
            <person name="Wang Q."/>
            <person name="Rokita A.G."/>
            <person name="Wehrens X.H."/>
            <person name="Song L.S."/>
            <person name="Anderson M.E."/>
        </authorList>
    </citation>
    <scope>FUNCTION</scope>
</reference>
<reference key="17">
    <citation type="journal article" date="2016" name="J. Biol. Chem.">
        <title>Mitochondrial calcium uptake modulates synaptic vesicle endocytosis in central nerve terminals.</title>
        <authorList>
            <person name="Marland J.R."/>
            <person name="Hasel P."/>
            <person name="Bonnycastle K."/>
            <person name="Cousin M.A."/>
        </authorList>
    </citation>
    <scope>FUNCTION</scope>
</reference>
<dbReference type="EMBL" id="AK144727">
    <property type="protein sequence ID" value="BAE26033.1"/>
    <property type="molecule type" value="mRNA"/>
</dbReference>
<dbReference type="EMBL" id="AK161322">
    <property type="protein sequence ID" value="BAE36322.1"/>
    <property type="molecule type" value="mRNA"/>
</dbReference>
<dbReference type="EMBL" id="AC155940">
    <property type="status" value="NOT_ANNOTATED_CDS"/>
    <property type="molecule type" value="Genomic_DNA"/>
</dbReference>
<dbReference type="EMBL" id="AC022699">
    <property type="status" value="NOT_ANNOTATED_CDS"/>
    <property type="molecule type" value="Genomic_DNA"/>
</dbReference>
<dbReference type="EMBL" id="BC139254">
    <property type="protein sequence ID" value="AAI39255.1"/>
    <property type="molecule type" value="mRNA"/>
</dbReference>
<dbReference type="EMBL" id="BC139257">
    <property type="protein sequence ID" value="AAI39258.1"/>
    <property type="molecule type" value="mRNA"/>
</dbReference>
<dbReference type="CCDS" id="CCDS23866.2">
    <molecule id="Q3UMR5-1"/>
</dbReference>
<dbReference type="RefSeq" id="NP_001028431.2">
    <molecule id="Q3UMR5-1"/>
    <property type="nucleotide sequence ID" value="NM_001033259.4"/>
</dbReference>
<dbReference type="SMR" id="Q3UMR5"/>
<dbReference type="BioGRID" id="229684">
    <property type="interactions" value="9"/>
</dbReference>
<dbReference type="FunCoup" id="Q3UMR5">
    <property type="interactions" value="1471"/>
</dbReference>
<dbReference type="IntAct" id="Q3UMR5">
    <property type="interactions" value="3"/>
</dbReference>
<dbReference type="MINT" id="Q3UMR5"/>
<dbReference type="STRING" id="10090.ENSMUSP00000020312"/>
<dbReference type="TCDB" id="1.A.77.1.1">
    <property type="family name" value="the mg(2+)/ca(2+) uniporter (mcu) family"/>
</dbReference>
<dbReference type="iPTMnet" id="Q3UMR5"/>
<dbReference type="MetOSite" id="Q3UMR5"/>
<dbReference type="PhosphoSitePlus" id="Q3UMR5"/>
<dbReference type="SwissPalm" id="Q3UMR5"/>
<dbReference type="jPOST" id="Q3UMR5"/>
<dbReference type="PaxDb" id="10090-ENSMUSP00000020312"/>
<dbReference type="PeptideAtlas" id="Q3UMR5"/>
<dbReference type="ProteomicsDB" id="252754">
    <molecule id="Q3UMR5-1"/>
</dbReference>
<dbReference type="ProteomicsDB" id="252755">
    <molecule id="Q3UMR5-2"/>
</dbReference>
<dbReference type="Pumba" id="Q3UMR5"/>
<dbReference type="Antibodypedia" id="3091">
    <property type="antibodies" value="81 antibodies from 21 providers"/>
</dbReference>
<dbReference type="Ensembl" id="ENSMUST00000009791.7">
    <molecule id="Q3UMR5-2"/>
    <property type="protein sequence ID" value="ENSMUSP00000009791.7"/>
    <property type="gene ID" value="ENSMUSG00000009647.14"/>
</dbReference>
<dbReference type="Ensembl" id="ENSMUST00000020312.13">
    <molecule id="Q3UMR5-1"/>
    <property type="protein sequence ID" value="ENSMUSP00000020312.7"/>
    <property type="gene ID" value="ENSMUSG00000009647.14"/>
</dbReference>
<dbReference type="GeneID" id="215999"/>
<dbReference type="KEGG" id="mmu:215999"/>
<dbReference type="UCSC" id="uc007fds.3">
    <molecule id="Q3UMR5-2"/>
    <property type="organism name" value="mouse"/>
</dbReference>
<dbReference type="UCSC" id="uc007fdt.3">
    <molecule id="Q3UMR5-1"/>
    <property type="organism name" value="mouse"/>
</dbReference>
<dbReference type="AGR" id="MGI:3026965"/>
<dbReference type="CTD" id="90550"/>
<dbReference type="MGI" id="MGI:3026965">
    <property type="gene designation" value="Mcu"/>
</dbReference>
<dbReference type="VEuPathDB" id="HostDB:ENSMUSG00000009647"/>
<dbReference type="eggNOG" id="KOG2966">
    <property type="taxonomic scope" value="Eukaryota"/>
</dbReference>
<dbReference type="GeneTree" id="ENSGT00940000157528"/>
<dbReference type="HOGENOM" id="CLU_056554_0_0_1"/>
<dbReference type="InParanoid" id="Q3UMR5"/>
<dbReference type="OMA" id="DDIYVEY"/>
<dbReference type="OrthoDB" id="278338at2759"/>
<dbReference type="PhylomeDB" id="Q3UMR5"/>
<dbReference type="TreeFam" id="TF314435"/>
<dbReference type="Reactome" id="R-MMU-8949215">
    <property type="pathway name" value="Mitochondrial calcium ion transport"/>
</dbReference>
<dbReference type="Reactome" id="R-MMU-8949664">
    <property type="pathway name" value="Processing of SMDT1"/>
</dbReference>
<dbReference type="BioGRID-ORCS" id="215999">
    <property type="hits" value="4 hits in 77 CRISPR screens"/>
</dbReference>
<dbReference type="CD-CODE" id="CE726F99">
    <property type="entry name" value="Postsynaptic density"/>
</dbReference>
<dbReference type="ChiTaRS" id="Mcu">
    <property type="organism name" value="mouse"/>
</dbReference>
<dbReference type="PRO" id="PR:Q3UMR5"/>
<dbReference type="Proteomes" id="UP000000589">
    <property type="component" value="Chromosome 10"/>
</dbReference>
<dbReference type="RNAct" id="Q3UMR5">
    <property type="molecule type" value="protein"/>
</dbReference>
<dbReference type="Bgee" id="ENSMUSG00000009647">
    <property type="expression patterns" value="Expressed in animal zygote and 238 other cell types or tissues"/>
</dbReference>
<dbReference type="ExpressionAtlas" id="Q3UMR5">
    <property type="expression patterns" value="baseline and differential"/>
</dbReference>
<dbReference type="GO" id="GO:0034704">
    <property type="term" value="C:calcium channel complex"/>
    <property type="evidence" value="ECO:0000314"/>
    <property type="project" value="UniProtKB"/>
</dbReference>
<dbReference type="GO" id="GO:0005743">
    <property type="term" value="C:mitochondrial inner membrane"/>
    <property type="evidence" value="ECO:0000250"/>
    <property type="project" value="UniProtKB"/>
</dbReference>
<dbReference type="GO" id="GO:0005739">
    <property type="term" value="C:mitochondrion"/>
    <property type="evidence" value="ECO:0007005"/>
    <property type="project" value="MGI"/>
</dbReference>
<dbReference type="GO" id="GO:1990246">
    <property type="term" value="C:uniplex complex"/>
    <property type="evidence" value="ECO:0000250"/>
    <property type="project" value="UniProtKB"/>
</dbReference>
<dbReference type="GO" id="GO:0005262">
    <property type="term" value="F:calcium channel activity"/>
    <property type="evidence" value="ECO:0000314"/>
    <property type="project" value="UniProtKB"/>
</dbReference>
<dbReference type="GO" id="GO:0046872">
    <property type="term" value="F:metal ion binding"/>
    <property type="evidence" value="ECO:0007669"/>
    <property type="project" value="UniProtKB-KW"/>
</dbReference>
<dbReference type="GO" id="GO:0015292">
    <property type="term" value="F:uniporter activity"/>
    <property type="evidence" value="ECO:0000250"/>
    <property type="project" value="UniProtKB"/>
</dbReference>
<dbReference type="GO" id="GO:0036444">
    <property type="term" value="P:calcium import into the mitochondrion"/>
    <property type="evidence" value="ECO:0000250"/>
    <property type="project" value="UniProtKB"/>
</dbReference>
<dbReference type="GO" id="GO:0019722">
    <property type="term" value="P:calcium-mediated signaling"/>
    <property type="evidence" value="ECO:0000250"/>
    <property type="project" value="UniProtKB"/>
</dbReference>
<dbReference type="GO" id="GO:0016477">
    <property type="term" value="P:cell migration"/>
    <property type="evidence" value="ECO:0000315"/>
    <property type="project" value="MGI"/>
</dbReference>
<dbReference type="GO" id="GO:0008283">
    <property type="term" value="P:cell population proliferation"/>
    <property type="evidence" value="ECO:0000315"/>
    <property type="project" value="MGI"/>
</dbReference>
<dbReference type="GO" id="GO:0072732">
    <property type="term" value="P:cellular response to calcium ion starvation"/>
    <property type="evidence" value="ECO:0007669"/>
    <property type="project" value="Ensembl"/>
</dbReference>
<dbReference type="GO" id="GO:0006091">
    <property type="term" value="P:generation of precursor metabolites and energy"/>
    <property type="evidence" value="ECO:0000315"/>
    <property type="project" value="MGI"/>
</dbReference>
<dbReference type="GO" id="GO:0042593">
    <property type="term" value="P:glucose homeostasis"/>
    <property type="evidence" value="ECO:0000250"/>
    <property type="project" value="UniProtKB"/>
</dbReference>
<dbReference type="GO" id="GO:0006851">
    <property type="term" value="P:mitochondrial calcium ion transmembrane transport"/>
    <property type="evidence" value="ECO:0000315"/>
    <property type="project" value="UniProtKB"/>
</dbReference>
<dbReference type="GO" id="GO:0032024">
    <property type="term" value="P:positive regulation of insulin secretion"/>
    <property type="evidence" value="ECO:0000250"/>
    <property type="project" value="UniProtKB"/>
</dbReference>
<dbReference type="GO" id="GO:0051561">
    <property type="term" value="P:positive regulation of mitochondrial calcium ion concentration"/>
    <property type="evidence" value="ECO:0000315"/>
    <property type="project" value="UniProtKB"/>
</dbReference>
<dbReference type="GO" id="GO:0090141">
    <property type="term" value="P:positive regulation of mitochondrial fission"/>
    <property type="evidence" value="ECO:0007669"/>
    <property type="project" value="Ensembl"/>
</dbReference>
<dbReference type="GO" id="GO:0090023">
    <property type="term" value="P:positive regulation of neutrophil chemotaxis"/>
    <property type="evidence" value="ECO:0007669"/>
    <property type="project" value="Ensembl"/>
</dbReference>
<dbReference type="GO" id="GO:0051259">
    <property type="term" value="P:protein complex oligomerization"/>
    <property type="evidence" value="ECO:0000250"/>
    <property type="project" value="UniProtKB"/>
</dbReference>
<dbReference type="InterPro" id="IPR006769">
    <property type="entry name" value="MCU_C"/>
</dbReference>
<dbReference type="InterPro" id="IPR039055">
    <property type="entry name" value="MCU_fam"/>
</dbReference>
<dbReference type="PANTHER" id="PTHR13462">
    <property type="entry name" value="CALCIUM UNIPORTER PROTEIN, MITOCHONDRIAL"/>
    <property type="match status" value="1"/>
</dbReference>
<dbReference type="PANTHER" id="PTHR13462:SF16">
    <property type="entry name" value="CALCIUM UNIPORTER PROTEIN, MITOCHONDRIAL"/>
    <property type="match status" value="1"/>
</dbReference>
<dbReference type="Pfam" id="PF04678">
    <property type="entry name" value="MCU"/>
    <property type="match status" value="1"/>
</dbReference>
<keyword id="KW-0007">Acetylation</keyword>
<keyword id="KW-0025">Alternative splicing</keyword>
<keyword id="KW-0106">Calcium</keyword>
<keyword id="KW-0107">Calcium channel</keyword>
<keyword id="KW-0109">Calcium transport</keyword>
<keyword id="KW-0175">Coiled coil</keyword>
<keyword id="KW-0318">Glutathionylation</keyword>
<keyword id="KW-0407">Ion channel</keyword>
<keyword id="KW-0406">Ion transport</keyword>
<keyword id="KW-0472">Membrane</keyword>
<keyword id="KW-0479">Metal-binding</keyword>
<keyword id="KW-0496">Mitochondrion</keyword>
<keyword id="KW-0999">Mitochondrion inner membrane</keyword>
<keyword id="KW-0597">Phosphoprotein</keyword>
<keyword id="KW-1185">Reference proteome</keyword>
<keyword id="KW-0809">Transit peptide</keyword>
<keyword id="KW-0812">Transmembrane</keyword>
<keyword id="KW-1133">Transmembrane helix</keyword>
<keyword id="KW-0813">Transport</keyword>
<proteinExistence type="evidence at protein level"/>
<organism>
    <name type="scientific">Mus musculus</name>
    <name type="common">Mouse</name>
    <dbReference type="NCBI Taxonomy" id="10090"/>
    <lineage>
        <taxon>Eukaryota</taxon>
        <taxon>Metazoa</taxon>
        <taxon>Chordata</taxon>
        <taxon>Craniata</taxon>
        <taxon>Vertebrata</taxon>
        <taxon>Euteleostomi</taxon>
        <taxon>Mammalia</taxon>
        <taxon>Eutheria</taxon>
        <taxon>Euarchontoglires</taxon>
        <taxon>Glires</taxon>
        <taxon>Rodentia</taxon>
        <taxon>Myomorpha</taxon>
        <taxon>Muroidea</taxon>
        <taxon>Muridae</taxon>
        <taxon>Murinae</taxon>
        <taxon>Mus</taxon>
        <taxon>Mus</taxon>
    </lineage>
</organism>
<protein>
    <recommendedName>
        <fullName evidence="17">Calcium uniporter protein, mitochondrial</fullName>
    </recommendedName>
</protein>
<name>MCU_MOUSE</name>
<comment type="function">
    <text evidence="1 3 6 7 8 9 10 12 13 14">Channel-forming and calcium-conducting subunit of the mitochondrial inner membrane calcium uniporter complex (uniplex), which mediates calcium uptake into the mitochondrial matrix (PubMed:21685886, PubMed:23900286, PubMed:24212091). MCU channel activity is regulated by the calcium-sensor subunits of the uniplex MICU1 and MICU2 (or MICU3) (By similarity). Mitochondrial calcium homeostasis plays key roles in cellular physiology and regulates ATP production, cytoplasmic calcium signals and activation of cell death pathways (By similarity). Involved in buffering the amplitude of systolic calcium rises in cardiomyocytes (By similarity). While dispensable for baseline homeostatic cardiac function, acts as a key regulator of short-term mitochondrial calcium loading underlying a 'fight-or-flight' response during acute stress: acts by mediating a rapid increase of mitochondrial calcium in pacemaker cells (PubMed:25603276, PubMed:26119731, PubMed:26119742). Participates in mitochondrial permeability transition during ischemia-reperfusion injury (PubMed:26119731). Mitochondrial calcium uptake in skeletal muscle cells is involved in muscle size in adults (PubMed:25732818). Regulates synaptic vesicle endocytosis kinetics in central nerve terminal (PubMed:26644474). Regulates glucose-dependent insulin secretion in pancreatic beta-cells by regulating mitochondrial calcium uptake (By similarity). Involved in antigen processing and presentation (PubMed:25251370).</text>
</comment>
<comment type="catalytic activity">
    <reaction evidence="1">
        <text>Ca(2+)(in) = Ca(2+)(out)</text>
        <dbReference type="Rhea" id="RHEA:29671"/>
        <dbReference type="ChEBI" id="CHEBI:29108"/>
    </reaction>
</comment>
<comment type="activity regulation">
    <text evidence="1">MCU channel activity is regulated by the heterodimer composed of MICU1 and either MICU2 or MICU3, which act as calcium-sensors (By similarity). At low calcium levels, MICU1 occludes the pore of the MCU channel, preventing mitochondrial calcium uptake (By similarity). At higher calcium levels, calcium-binding to MICU1 and MICU2 (or MICU3) induces a conformational change that weakens MCU-MICU1 interactions and moves the MICU1-MICU2 heterodimer away from the pore, allowing calcium permeation through the channel (By similarity). MCU channel activity is gated by EMRE/SMDT1 via the juxtamembrane helix loop (By similarity). Inhibited by ruthenium red or its derivative Ru360 (By similarity).</text>
</comment>
<comment type="subunit">
    <text evidence="1 5 6">Homotetramer (PubMed:23900286). Component of the uniplex complex, composed of MCU, EMRE/SMDT1, MICU1 and MICU2 (or MICU3) in a 4:4:1:1 stoichiometry (PubMed:23409044). Interacts with CCDC109B/MCUB; this inhibits channel activity (By similarity). Interacts with MCUR1 (By similarity). Interactions with MICU1 and MCUR1 are mutually exclusive (By similarity). Interacts with SLC25A23 (By similarity).</text>
</comment>
<comment type="interaction">
    <interactant intactId="EBI-776370">
        <id>Q3UMR5</id>
    </interactant>
    <interactant intactId="EBI-8847756">
        <id>Q810S1</id>
        <label>Mcub</label>
    </interactant>
    <organismsDiffer>false</organismsDiffer>
    <experiments>3</experiments>
</comment>
<comment type="subcellular location">
    <subcellularLocation>
        <location evidence="6 18">Mitochondrion inner membrane</location>
        <topology evidence="6">Multi-pass membrane protein</topology>
    </subcellularLocation>
</comment>
<comment type="alternative products">
    <event type="alternative splicing"/>
    <isoform>
        <id>Q3UMR5-1</id>
        <name>1</name>
        <sequence type="displayed"/>
    </isoform>
    <isoform>
        <id>Q3UMR5-2</id>
        <name>2</name>
        <sequence type="described" ref="VSP_024264 VSP_024265"/>
    </isoform>
</comment>
<comment type="tissue specificity">
    <text evidence="4 5 6 11">Detected in heart muscle (at protein level) (PubMed:26057074). Expressed in skeletal muscle, heart, kidney, liver, brain, lung, white fat and spleen.</text>
</comment>
<comment type="domain">
    <text evidence="1">The selectivity filter, in which calcium ions are arranged in single file, is composed of two acidic rings separated by one helical turn along the central axis of the channel pore.</text>
</comment>
<comment type="domain">
    <text evidence="1">The N-terminal domain is required for efficient Ca(2+) uptake and for interaction with MCUR1. It is not required for targeting to the mitochondria, oligomerization, interaction with MICU1 and MICU2, or assembly of the uniplex complex.</text>
</comment>
<comment type="PTM">
    <text evidence="1">Phosphorylation by CaMK2 in heart leads to increased MCU current. The regulation of MCU by CaMK2 is however subject to discussion: another group was unable to reproduce these results. Phosphorylated on tyrosines by PTK2B/PYK2, promoting oligomerization.</text>
</comment>
<comment type="PTM">
    <text evidence="1">Glutathionylation at Cys-96 in response to reactive oxygen species (ROS) promotes MCU higher-order assembly, leading to constitutive activation of the MCU channel and mitochondrial calcium overload.</text>
</comment>
<comment type="PTM">
    <text evidence="1">Undergoes proteolytic degradation by SPG7.</text>
</comment>
<comment type="disruption phenotype">
    <text evidence="7 11 12 13">No visible phenotype (PubMed:24212091, PubMed:26057074). Although slightly smaller, mice are grossly normal (PubMed:24212091). Only minor alterations in basal energetics are observed (PubMed:24212091). Cells show a strong reduction, but not a complete absence, of mitochondrial matrix calcium (PubMed:24212091). The skeletal muscles exhibit alterations in the phosphorylation and activity of pyruvate dehydrogenase and mice show defects in ability to perform strenuous work (PubMed:24212091). Mitochondria lack evidence for calcium-induced permeability transition pore (PTP) opening (PubMed:24212091). Mitochondria from mutant mouse heart muscle have impaired Ca(2+) uptake and reduced Ca(2+) levels in the mitochondrial matrix; still, mutant mice have apparently normal heart function and display no cardiac defects (PubMed:26057074). Conditional mutant mice with cardiomyocyte-specific deletion of Mcu in adults display no overt baseline phenotype and are protected against mitochondrial calcium overload by preventing the activation of the mitochondrial permeability transition pore (PubMed:26119731, PubMed:26119742). Mice however lack contractile responsiveness to acute stress and 'fight-or-flight' response: they produce mitochondria refractory to acute calcium uptake, with impaired ATP production and inhibited mitochondrial permeability transition pore opening upon acute calcium challenge (PubMed:26119731, PubMed:26119742).</text>
</comment>
<comment type="similarity">
    <text evidence="17">Belongs to the MCU (TC 1.A.77) family.</text>
</comment>